<keyword id="KW-0010">Activator</keyword>
<keyword id="KW-0217">Developmental protein</keyword>
<keyword id="KW-0238">DNA-binding</keyword>
<keyword id="KW-0371">Homeobox</keyword>
<keyword id="KW-0488">Methylation</keyword>
<keyword id="KW-0539">Nucleus</keyword>
<keyword id="KW-1185">Reference proteome</keyword>
<keyword id="KW-0678">Repressor</keyword>
<keyword id="KW-0804">Transcription</keyword>
<keyword id="KW-0805">Transcription regulation</keyword>
<feature type="chain" id="PRO_0000048952" description="Homeobox protein Nkx-6.1">
    <location>
        <begin position="1"/>
        <end position="364"/>
    </location>
</feature>
<feature type="DNA-binding region" description="Homeobox" evidence="3">
    <location>
        <begin position="236"/>
        <end position="295"/>
    </location>
</feature>
<feature type="region of interest" description="Disordered" evidence="4">
    <location>
        <begin position="35"/>
        <end position="134"/>
    </location>
</feature>
<feature type="region of interest" description="Repressor domain">
    <location>
        <begin position="101"/>
        <end position="268"/>
    </location>
</feature>
<feature type="region of interest" description="Disordered" evidence="4">
    <location>
        <begin position="294"/>
        <end position="364"/>
    </location>
</feature>
<feature type="region of interest" description="Involved in DNA-binding">
    <location>
        <begin position="306"/>
        <end position="364"/>
    </location>
</feature>
<feature type="compositionally biased region" description="Low complexity" evidence="4">
    <location>
        <begin position="48"/>
        <end position="92"/>
    </location>
</feature>
<feature type="compositionally biased region" description="Low complexity" evidence="4">
    <location>
        <begin position="109"/>
        <end position="134"/>
    </location>
</feature>
<feature type="compositionally biased region" description="Basic and acidic residues" evidence="4">
    <location>
        <begin position="304"/>
        <end position="317"/>
    </location>
</feature>
<feature type="modified residue" description="Asymmetric dimethylarginine" evidence="2">
    <location>
        <position position="189"/>
    </location>
</feature>
<feature type="mutagenesis site" description="Loss of DNA -binding specificity." evidence="7">
    <original>EEDD</original>
    <variation>RPPR</variation>
    <location>
        <begin position="321"/>
        <end position="324"/>
    </location>
</feature>
<proteinExistence type="evidence at protein level"/>
<evidence type="ECO:0000250" key="1"/>
<evidence type="ECO:0000250" key="2">
    <source>
        <dbReference type="UniProtKB" id="P78426"/>
    </source>
</evidence>
<evidence type="ECO:0000255" key="3">
    <source>
        <dbReference type="PROSITE-ProRule" id="PRU00108"/>
    </source>
</evidence>
<evidence type="ECO:0000256" key="4">
    <source>
        <dbReference type="SAM" id="MobiDB-lite"/>
    </source>
</evidence>
<evidence type="ECO:0000269" key="5">
    <source>
    </source>
</evidence>
<evidence type="ECO:0000269" key="6">
    <source>
    </source>
</evidence>
<evidence type="ECO:0000269" key="7">
    <source>
    </source>
</evidence>
<evidence type="ECO:0000269" key="8">
    <source>
    </source>
</evidence>
<evidence type="ECO:0000305" key="9"/>
<organism>
    <name type="scientific">Mesocricetus auratus</name>
    <name type="common">Golden hamster</name>
    <dbReference type="NCBI Taxonomy" id="10036"/>
    <lineage>
        <taxon>Eukaryota</taxon>
        <taxon>Metazoa</taxon>
        <taxon>Chordata</taxon>
        <taxon>Craniata</taxon>
        <taxon>Vertebrata</taxon>
        <taxon>Euteleostomi</taxon>
        <taxon>Mammalia</taxon>
        <taxon>Eutheria</taxon>
        <taxon>Euarchontoglires</taxon>
        <taxon>Glires</taxon>
        <taxon>Rodentia</taxon>
        <taxon>Myomorpha</taxon>
        <taxon>Muroidea</taxon>
        <taxon>Cricetidae</taxon>
        <taxon>Cricetinae</taxon>
        <taxon>Mesocricetus</taxon>
    </lineage>
</organism>
<sequence>MLAVGAMEGPRQSAFLLSSPPLAALHSMAEMKTPLYPATYPPLPTGPPSSSSSSSSSSPSPPLGAHNPGGLKPPAAGGLSSLSSPPQQLSAATPHGINDILSRPSMPVASGAALPSASPSGSSSSSSSSASATSASAAAAAAAAAAAAAASSPAGLLAGLPRFSSLSPPPPPPGLYFSPSAAAVAAVGRYPKPLAELPGRAPIFWPGVMQSPPWRDARLACTPHQGSILLDKDGKRKHTRPTFSGQQIFALEKTFEQTKYLAGPERARLAYSLGMTESQVKVWFQNRRTKWRKKHAAEMATAKKKQDSETERLKGTSENEEEDDDYNKPLDPNSDDEKITQLLKKHKSSSGGLLLHASEAEGSS</sequence>
<dbReference type="EMBL" id="X81409">
    <property type="protein sequence ID" value="CAA57166.1"/>
    <property type="molecule type" value="mRNA"/>
</dbReference>
<dbReference type="PIR" id="I48188">
    <property type="entry name" value="I48188"/>
</dbReference>
<dbReference type="RefSeq" id="NP_001268625.1">
    <property type="nucleotide sequence ID" value="NM_001281696.1"/>
</dbReference>
<dbReference type="SMR" id="Q60554"/>
<dbReference type="STRING" id="10036.ENSMAUP00000021852"/>
<dbReference type="GeneID" id="101826537"/>
<dbReference type="KEGG" id="maua:101826537"/>
<dbReference type="CTD" id="4825"/>
<dbReference type="eggNOG" id="KOG0847">
    <property type="taxonomic scope" value="Eukaryota"/>
</dbReference>
<dbReference type="OrthoDB" id="6159439at2759"/>
<dbReference type="Proteomes" id="UP000189706">
    <property type="component" value="Unplaced"/>
</dbReference>
<dbReference type="GO" id="GO:0005634">
    <property type="term" value="C:nucleus"/>
    <property type="evidence" value="ECO:0007669"/>
    <property type="project" value="UniProtKB-SubCell"/>
</dbReference>
<dbReference type="GO" id="GO:0001228">
    <property type="term" value="F:DNA-binding transcription activator activity, RNA polymerase II-specific"/>
    <property type="evidence" value="ECO:0000315"/>
    <property type="project" value="BHF-UCL"/>
</dbReference>
<dbReference type="GO" id="GO:0000978">
    <property type="term" value="F:RNA polymerase II cis-regulatory region sequence-specific DNA binding"/>
    <property type="evidence" value="ECO:0007669"/>
    <property type="project" value="TreeGrafter"/>
</dbReference>
<dbReference type="GO" id="GO:0061629">
    <property type="term" value="F:RNA polymerase II-specific DNA-binding transcription factor binding"/>
    <property type="evidence" value="ECO:0000353"/>
    <property type="project" value="BHF-UCL"/>
</dbReference>
<dbReference type="GO" id="GO:0010255">
    <property type="term" value="P:glucose mediated signaling pathway"/>
    <property type="evidence" value="ECO:0000314"/>
    <property type="project" value="BHF-UCL"/>
</dbReference>
<dbReference type="GO" id="GO:0000122">
    <property type="term" value="P:negative regulation of transcription by RNA polymerase II"/>
    <property type="evidence" value="ECO:0000315"/>
    <property type="project" value="BHF-UCL"/>
</dbReference>
<dbReference type="GO" id="GO:0031016">
    <property type="term" value="P:pancreas development"/>
    <property type="evidence" value="ECO:0000315"/>
    <property type="project" value="BHF-UCL"/>
</dbReference>
<dbReference type="GO" id="GO:0045944">
    <property type="term" value="P:positive regulation of transcription by RNA polymerase II"/>
    <property type="evidence" value="ECO:0000315"/>
    <property type="project" value="BHF-UCL"/>
</dbReference>
<dbReference type="GO" id="GO:2000078">
    <property type="term" value="P:positive regulation of type B pancreatic cell development"/>
    <property type="evidence" value="ECO:0000315"/>
    <property type="project" value="BHF-UCL"/>
</dbReference>
<dbReference type="GO" id="GO:0072560">
    <property type="term" value="P:type B pancreatic cell maturation"/>
    <property type="evidence" value="ECO:0000315"/>
    <property type="project" value="BHF-UCL"/>
</dbReference>
<dbReference type="GO" id="GO:0044342">
    <property type="term" value="P:type B pancreatic cell proliferation"/>
    <property type="evidence" value="ECO:0000250"/>
    <property type="project" value="UniProtKB"/>
</dbReference>
<dbReference type="CDD" id="cd00086">
    <property type="entry name" value="homeodomain"/>
    <property type="match status" value="1"/>
</dbReference>
<dbReference type="FunFam" id="1.10.10.60:FF:000067">
    <property type="entry name" value="NK6 homeobox 1"/>
    <property type="match status" value="1"/>
</dbReference>
<dbReference type="Gene3D" id="1.10.10.60">
    <property type="entry name" value="Homeodomain-like"/>
    <property type="match status" value="1"/>
</dbReference>
<dbReference type="InterPro" id="IPR001356">
    <property type="entry name" value="HD"/>
</dbReference>
<dbReference type="InterPro" id="IPR020479">
    <property type="entry name" value="HD_metazoa"/>
</dbReference>
<dbReference type="InterPro" id="IPR017970">
    <property type="entry name" value="Homeobox_CS"/>
</dbReference>
<dbReference type="InterPro" id="IPR050394">
    <property type="entry name" value="Homeobox_NK-like"/>
</dbReference>
<dbReference type="InterPro" id="IPR009057">
    <property type="entry name" value="Homeodomain-like_sf"/>
</dbReference>
<dbReference type="InterPro" id="IPR000047">
    <property type="entry name" value="HTH_motif"/>
</dbReference>
<dbReference type="PANTHER" id="PTHR24340">
    <property type="entry name" value="HOMEOBOX PROTEIN NKX"/>
    <property type="match status" value="1"/>
</dbReference>
<dbReference type="PANTHER" id="PTHR24340:SF31">
    <property type="entry name" value="HOMEOBOX PROTEIN NKX-6.1"/>
    <property type="match status" value="1"/>
</dbReference>
<dbReference type="Pfam" id="PF00046">
    <property type="entry name" value="Homeodomain"/>
    <property type="match status" value="1"/>
</dbReference>
<dbReference type="PRINTS" id="PR00024">
    <property type="entry name" value="HOMEOBOX"/>
</dbReference>
<dbReference type="PRINTS" id="PR00031">
    <property type="entry name" value="HTHREPRESSR"/>
</dbReference>
<dbReference type="SMART" id="SM00389">
    <property type="entry name" value="HOX"/>
    <property type="match status" value="1"/>
</dbReference>
<dbReference type="SUPFAM" id="SSF46689">
    <property type="entry name" value="Homeodomain-like"/>
    <property type="match status" value="1"/>
</dbReference>
<dbReference type="PROSITE" id="PS00027">
    <property type="entry name" value="HOMEOBOX_1"/>
    <property type="match status" value="1"/>
</dbReference>
<dbReference type="PROSITE" id="PS50071">
    <property type="entry name" value="HOMEOBOX_2"/>
    <property type="match status" value="1"/>
</dbReference>
<name>NKX61_MESAU</name>
<gene>
    <name type="primary">NKX6-1</name>
    <name type="synonym">NKX6A</name>
</gene>
<reference key="1">
    <citation type="journal article" date="1994" name="Proc. Natl. Acad. Sci. U.S.A.">
        <title>Pancreatic beta cells express a diverse set of homeobox genes.</title>
        <authorList>
            <person name="Rudnick A."/>
            <person name="Ling T.Y."/>
            <person name="Odagiri H."/>
            <person name="Rutter W.J."/>
            <person name="German M.S."/>
        </authorList>
    </citation>
    <scope>NUCLEOTIDE SEQUENCE [MRNA]</scope>
    <source>
        <tissue>Pancreatic islet</tissue>
    </source>
</reference>
<reference key="2">
    <citation type="journal article" date="2000" name="J. Biol. Chem.">
        <title>Beta-cell differentiation factor Nkx6.1 contains distinct DNA binding interference and transcriptional repression domains.</title>
        <authorList>
            <person name="Mirmira R.G."/>
            <person name="Watada H."/>
            <person name="German M.S."/>
        </authorList>
    </citation>
    <scope>DNA-BINDING</scope>
    <scope>FUNCTION</scope>
</reference>
<reference key="3">
    <citation type="journal article" date="2004" name="Mol. Endocrinol.">
        <title>The transcriptional repressor Nkx6.1 also functions as a deoxyribonucleic acid context-dependent transcriptional activator during pancreatic beta-cell differentiation: evidence for feedback activation of the nkx6.1 gene by Nkx6.1.</title>
        <authorList>
            <person name="Iype T."/>
            <person name="Taylor D.G."/>
            <person name="Ziesmann S.M."/>
            <person name="Garmey J.C."/>
            <person name="Watada H."/>
            <person name="Mirmira R.G."/>
        </authorList>
    </citation>
    <scope>DNA-BINDING</scope>
    <scope>FUNCTION</scope>
</reference>
<reference key="4">
    <citation type="journal article" date="2005" name="Biochemistry">
        <title>The C-terminal domain of the beta cell homeodomain factor Nkx6.1 enhances sequence-selective DNA binding at the insulin promoter.</title>
        <authorList>
            <person name="Taylor D.G."/>
            <person name="Babu D."/>
            <person name="Mirmira R.G."/>
        </authorList>
    </citation>
    <scope>FUNCTION</scope>
    <scope>DNA-BINDING</scope>
    <scope>MUTAGENESIS OF 321-GLU--ASP-324</scope>
</reference>
<reference key="5">
    <citation type="journal article" date="2008" name="Mol. Cell. Biol.">
        <title>Stimulation of human and rat islet beta-cell proliferation with retention of function by the homeodomain transcription factor Nkx6.1.</title>
        <authorList>
            <person name="Schisler J.C."/>
            <person name="Fueger P.T."/>
            <person name="Babu D.A."/>
            <person name="Hohmeier H.E."/>
            <person name="Tessem J.S."/>
            <person name="Lu D."/>
            <person name="Becker T.C."/>
            <person name="Naziruddin B."/>
            <person name="Levy M."/>
            <person name="Mirmira R.G."/>
            <person name="Newgard C.B."/>
        </authorList>
    </citation>
    <scope>FUNCTION IN TRANSCRIPTIONAL REGULATION IN ISLET BETA CELLS</scope>
</reference>
<protein>
    <recommendedName>
        <fullName>Homeobox protein Nkx-6.1</fullName>
    </recommendedName>
    <alternativeName>
        <fullName>Homeobox protein NK-6 homolog A</fullName>
    </alternativeName>
</protein>
<accession>Q60554</accession>
<comment type="function">
    <text evidence="1 5 6 7 8">Together with NKX2-2 and IRX3 acts to restrict the generation of motor neurons to the appropriate region of the neural tube. Belongs to the class II proteins of neuronal progenitor factors, which are induced by SHH signals (By similarity). Transcription factor which binds to specific A/T-rich DNA sequences in the promoter regions of a number of genes. Involved in transcriptional regulation in islet beta cells. Binds to the insulin promoter and is involved in regulation of the insulin gene.</text>
</comment>
<comment type="subcellular location">
    <subcellularLocation>
        <location evidence="9">Nucleus</location>
    </subcellularLocation>
</comment>
<comment type="tissue specificity">
    <text>Pancreatic beta cells.</text>
</comment>
<comment type="domain">
    <text evidence="1">The C-terminal domain contributes to sequence-specific DNA-binding.</text>
</comment>